<protein>
    <recommendedName>
        <fullName evidence="1">Elongation factor P</fullName>
        <shortName evidence="1">EF-P</shortName>
    </recommendedName>
</protein>
<sequence>MISVNDFKTGLTIEVDNGIWQVMEFQHVKPGKGAAFVRSKLRNLRTGAVQEKTFRAGEKVSKAHIENRRMQYLYASGDVHTFMDNETFEQLELSTAQIEHELKFLKENMEVHVISYQGETLGVEVPNTVELTVTETEPGIKGDTASGGTKPATLETGLTVQVPFFVNEGDVLVIDTRSGDYVSRA</sequence>
<keyword id="KW-0963">Cytoplasm</keyword>
<keyword id="KW-0251">Elongation factor</keyword>
<keyword id="KW-0648">Protein biosynthesis</keyword>
<keyword id="KW-1185">Reference proteome</keyword>
<gene>
    <name evidence="1" type="primary">efp</name>
    <name type="ordered locus">BH2799</name>
</gene>
<dbReference type="EMBL" id="BA000004">
    <property type="protein sequence ID" value="BAB06518.1"/>
    <property type="molecule type" value="Genomic_DNA"/>
</dbReference>
<dbReference type="PIR" id="G83999">
    <property type="entry name" value="G83999"/>
</dbReference>
<dbReference type="RefSeq" id="WP_010898947.1">
    <property type="nucleotide sequence ID" value="NC_002570.2"/>
</dbReference>
<dbReference type="SMR" id="Q9K951"/>
<dbReference type="STRING" id="272558.gene:10728699"/>
<dbReference type="GeneID" id="87598317"/>
<dbReference type="KEGG" id="bha:BH2799"/>
<dbReference type="eggNOG" id="COG0231">
    <property type="taxonomic scope" value="Bacteria"/>
</dbReference>
<dbReference type="HOGENOM" id="CLU_074944_0_1_9"/>
<dbReference type="OrthoDB" id="9801844at2"/>
<dbReference type="UniPathway" id="UPA00345"/>
<dbReference type="Proteomes" id="UP000001258">
    <property type="component" value="Chromosome"/>
</dbReference>
<dbReference type="GO" id="GO:0005737">
    <property type="term" value="C:cytoplasm"/>
    <property type="evidence" value="ECO:0007669"/>
    <property type="project" value="UniProtKB-SubCell"/>
</dbReference>
<dbReference type="GO" id="GO:0003746">
    <property type="term" value="F:translation elongation factor activity"/>
    <property type="evidence" value="ECO:0007669"/>
    <property type="project" value="UniProtKB-UniRule"/>
</dbReference>
<dbReference type="GO" id="GO:0043043">
    <property type="term" value="P:peptide biosynthetic process"/>
    <property type="evidence" value="ECO:0007669"/>
    <property type="project" value="InterPro"/>
</dbReference>
<dbReference type="CDD" id="cd04470">
    <property type="entry name" value="S1_EF-P_repeat_1"/>
    <property type="match status" value="1"/>
</dbReference>
<dbReference type="CDD" id="cd05794">
    <property type="entry name" value="S1_EF-P_repeat_2"/>
    <property type="match status" value="1"/>
</dbReference>
<dbReference type="FunFam" id="2.30.30.30:FF:000010">
    <property type="entry name" value="Elongation factor P"/>
    <property type="match status" value="1"/>
</dbReference>
<dbReference type="FunFam" id="2.40.50.140:FF:000004">
    <property type="entry name" value="Elongation factor P"/>
    <property type="match status" value="1"/>
</dbReference>
<dbReference type="FunFam" id="2.40.50.140:FF:000009">
    <property type="entry name" value="Elongation factor P"/>
    <property type="match status" value="1"/>
</dbReference>
<dbReference type="Gene3D" id="2.30.30.30">
    <property type="match status" value="1"/>
</dbReference>
<dbReference type="Gene3D" id="2.40.50.140">
    <property type="entry name" value="Nucleic acid-binding proteins"/>
    <property type="match status" value="2"/>
</dbReference>
<dbReference type="HAMAP" id="MF_00141">
    <property type="entry name" value="EF_P"/>
    <property type="match status" value="1"/>
</dbReference>
<dbReference type="InterPro" id="IPR015365">
    <property type="entry name" value="Elong-fact-P_C"/>
</dbReference>
<dbReference type="InterPro" id="IPR012340">
    <property type="entry name" value="NA-bd_OB-fold"/>
</dbReference>
<dbReference type="InterPro" id="IPR014722">
    <property type="entry name" value="Rib_uL2_dom2"/>
</dbReference>
<dbReference type="InterPro" id="IPR020599">
    <property type="entry name" value="Transl_elong_fac_P/YeiP"/>
</dbReference>
<dbReference type="InterPro" id="IPR013185">
    <property type="entry name" value="Transl_elong_KOW-like"/>
</dbReference>
<dbReference type="InterPro" id="IPR001059">
    <property type="entry name" value="Transl_elong_P/YeiP_cen"/>
</dbReference>
<dbReference type="InterPro" id="IPR013852">
    <property type="entry name" value="Transl_elong_P/YeiP_CS"/>
</dbReference>
<dbReference type="InterPro" id="IPR011768">
    <property type="entry name" value="Transl_elongation_fac_P"/>
</dbReference>
<dbReference type="InterPro" id="IPR008991">
    <property type="entry name" value="Translation_prot_SH3-like_sf"/>
</dbReference>
<dbReference type="NCBIfam" id="TIGR00038">
    <property type="entry name" value="efp"/>
    <property type="match status" value="1"/>
</dbReference>
<dbReference type="NCBIfam" id="NF001810">
    <property type="entry name" value="PRK00529.1"/>
    <property type="match status" value="1"/>
</dbReference>
<dbReference type="PANTHER" id="PTHR30053">
    <property type="entry name" value="ELONGATION FACTOR P"/>
    <property type="match status" value="1"/>
</dbReference>
<dbReference type="PANTHER" id="PTHR30053:SF12">
    <property type="entry name" value="ELONGATION FACTOR P (EF-P) FAMILY PROTEIN"/>
    <property type="match status" value="1"/>
</dbReference>
<dbReference type="Pfam" id="PF01132">
    <property type="entry name" value="EFP"/>
    <property type="match status" value="1"/>
</dbReference>
<dbReference type="Pfam" id="PF08207">
    <property type="entry name" value="EFP_N"/>
    <property type="match status" value="1"/>
</dbReference>
<dbReference type="Pfam" id="PF09285">
    <property type="entry name" value="Elong-fact-P_C"/>
    <property type="match status" value="1"/>
</dbReference>
<dbReference type="PIRSF" id="PIRSF005901">
    <property type="entry name" value="EF-P"/>
    <property type="match status" value="1"/>
</dbReference>
<dbReference type="SMART" id="SM01185">
    <property type="entry name" value="EFP"/>
    <property type="match status" value="1"/>
</dbReference>
<dbReference type="SMART" id="SM00841">
    <property type="entry name" value="Elong-fact-P_C"/>
    <property type="match status" value="1"/>
</dbReference>
<dbReference type="SUPFAM" id="SSF50249">
    <property type="entry name" value="Nucleic acid-binding proteins"/>
    <property type="match status" value="2"/>
</dbReference>
<dbReference type="SUPFAM" id="SSF50104">
    <property type="entry name" value="Translation proteins SH3-like domain"/>
    <property type="match status" value="1"/>
</dbReference>
<dbReference type="PROSITE" id="PS01275">
    <property type="entry name" value="EFP"/>
    <property type="match status" value="1"/>
</dbReference>
<organism>
    <name type="scientific">Halalkalibacterium halodurans (strain ATCC BAA-125 / DSM 18197 / FERM 7344 / JCM 9153 / C-125)</name>
    <name type="common">Bacillus halodurans</name>
    <dbReference type="NCBI Taxonomy" id="272558"/>
    <lineage>
        <taxon>Bacteria</taxon>
        <taxon>Bacillati</taxon>
        <taxon>Bacillota</taxon>
        <taxon>Bacilli</taxon>
        <taxon>Bacillales</taxon>
        <taxon>Bacillaceae</taxon>
        <taxon>Halalkalibacterium (ex Joshi et al. 2022)</taxon>
    </lineage>
</organism>
<comment type="function">
    <text evidence="1">Involved in peptide bond synthesis. Stimulates efficient translation and peptide-bond synthesis on native or reconstituted 70S ribosomes in vitro. Probably functions indirectly by altering the affinity of the ribosome for aminoacyl-tRNA, thus increasing their reactivity as acceptors for peptidyl transferase.</text>
</comment>
<comment type="pathway">
    <text evidence="1">Protein biosynthesis; polypeptide chain elongation.</text>
</comment>
<comment type="subcellular location">
    <subcellularLocation>
        <location evidence="1">Cytoplasm</location>
    </subcellularLocation>
</comment>
<comment type="similarity">
    <text evidence="1">Belongs to the elongation factor P family.</text>
</comment>
<reference key="1">
    <citation type="journal article" date="2000" name="Nucleic Acids Res.">
        <title>Complete genome sequence of the alkaliphilic bacterium Bacillus halodurans and genomic sequence comparison with Bacillus subtilis.</title>
        <authorList>
            <person name="Takami H."/>
            <person name="Nakasone K."/>
            <person name="Takaki Y."/>
            <person name="Maeno G."/>
            <person name="Sasaki R."/>
            <person name="Masui N."/>
            <person name="Fuji F."/>
            <person name="Hirama C."/>
            <person name="Nakamura Y."/>
            <person name="Ogasawara N."/>
            <person name="Kuhara S."/>
            <person name="Horikoshi K."/>
        </authorList>
    </citation>
    <scope>NUCLEOTIDE SEQUENCE [LARGE SCALE GENOMIC DNA]</scope>
    <source>
        <strain>ATCC BAA-125 / DSM 18197 / FERM 7344 / JCM 9153 / C-125</strain>
    </source>
</reference>
<evidence type="ECO:0000255" key="1">
    <source>
        <dbReference type="HAMAP-Rule" id="MF_00141"/>
    </source>
</evidence>
<proteinExistence type="inferred from homology"/>
<name>EFP_HALH5</name>
<feature type="chain" id="PRO_0000094196" description="Elongation factor P">
    <location>
        <begin position="1"/>
        <end position="185"/>
    </location>
</feature>
<accession>Q9K951</accession>